<accession>P13085</accession>
<keyword id="KW-0106">Calcium</keyword>
<keyword id="KW-0165">Cleavage on pair of basic residues</keyword>
<keyword id="KW-0963">Cytoplasm</keyword>
<keyword id="KW-0372">Hormone</keyword>
<keyword id="KW-0539">Nucleus</keyword>
<keyword id="KW-1185">Reference proteome</keyword>
<keyword id="KW-0964">Secreted</keyword>
<keyword id="KW-0732">Signal</keyword>
<protein>
    <recommendedName>
        <fullName>Parathyroid hormone-related protein</fullName>
        <shortName>PTH-rP</shortName>
        <shortName>PTHrP</shortName>
    </recommendedName>
    <alternativeName>
        <fullName>Parathyroid hormone-like protein</fullName>
        <shortName>PLP</shortName>
    </alternativeName>
    <component>
        <recommendedName>
            <fullName>Osteostatin</fullName>
        </recommendedName>
    </component>
</protein>
<organism>
    <name type="scientific">Rattus norvegicus</name>
    <name type="common">Rat</name>
    <dbReference type="NCBI Taxonomy" id="10116"/>
    <lineage>
        <taxon>Eukaryota</taxon>
        <taxon>Metazoa</taxon>
        <taxon>Chordata</taxon>
        <taxon>Craniata</taxon>
        <taxon>Vertebrata</taxon>
        <taxon>Euteleostomi</taxon>
        <taxon>Mammalia</taxon>
        <taxon>Eutheria</taxon>
        <taxon>Euarchontoglires</taxon>
        <taxon>Glires</taxon>
        <taxon>Rodentia</taxon>
        <taxon>Myomorpha</taxon>
        <taxon>Muroidea</taxon>
        <taxon>Muridae</taxon>
        <taxon>Murinae</taxon>
        <taxon>Rattus</taxon>
    </lineage>
</organism>
<gene>
    <name type="primary">Pthlh</name>
    <name type="synonym">Pthrp</name>
</gene>
<dbReference type="EMBL" id="M21967">
    <property type="protein sequence ID" value="AAA41981.1"/>
    <property type="molecule type" value="mRNA"/>
</dbReference>
<dbReference type="EMBL" id="M31603">
    <property type="protein sequence ID" value="AAA41980.1"/>
    <property type="molecule type" value="mRNA"/>
</dbReference>
<dbReference type="EMBL" id="M34112">
    <property type="protein sequence ID" value="AAA41889.1"/>
    <property type="molecule type" value="Genomic_DNA"/>
</dbReference>
<dbReference type="EMBL" id="M34108">
    <property type="protein sequence ID" value="AAA41889.1"/>
    <property type="status" value="JOINED"/>
    <property type="molecule type" value="Genomic_DNA"/>
</dbReference>
<dbReference type="EMBL" id="M34111">
    <property type="protein sequence ID" value="AAA41889.1"/>
    <property type="status" value="JOINED"/>
    <property type="molecule type" value="Genomic_DNA"/>
</dbReference>
<dbReference type="PIR" id="A34723">
    <property type="entry name" value="A30012"/>
</dbReference>
<dbReference type="RefSeq" id="NP_036768.1">
    <property type="nucleotide sequence ID" value="NM_012636.1"/>
</dbReference>
<dbReference type="BMRB" id="P13085"/>
<dbReference type="SMR" id="P13085"/>
<dbReference type="FunCoup" id="P13085">
    <property type="interactions" value="11"/>
</dbReference>
<dbReference type="PhosphoSitePlus" id="P13085"/>
<dbReference type="GeneID" id="24695"/>
<dbReference type="KEGG" id="rno:24695"/>
<dbReference type="UCSC" id="RGD:3441">
    <property type="organism name" value="rat"/>
</dbReference>
<dbReference type="AGR" id="RGD:3441"/>
<dbReference type="CTD" id="5744"/>
<dbReference type="RGD" id="3441">
    <property type="gene designation" value="Pthlh"/>
</dbReference>
<dbReference type="InParanoid" id="P13085"/>
<dbReference type="OrthoDB" id="9892514at2759"/>
<dbReference type="PhylomeDB" id="P13085"/>
<dbReference type="Reactome" id="R-RNO-373080">
    <property type="pathway name" value="Class B/2 (Secretin family receptors)"/>
</dbReference>
<dbReference type="PRO" id="PR:P13085"/>
<dbReference type="Proteomes" id="UP000002494">
    <property type="component" value="Unplaced"/>
</dbReference>
<dbReference type="GO" id="GO:0005737">
    <property type="term" value="C:cytoplasm"/>
    <property type="evidence" value="ECO:0007669"/>
    <property type="project" value="UniProtKB-SubCell"/>
</dbReference>
<dbReference type="GO" id="GO:0005576">
    <property type="term" value="C:extracellular region"/>
    <property type="evidence" value="ECO:0007669"/>
    <property type="project" value="UniProtKB-SubCell"/>
</dbReference>
<dbReference type="GO" id="GO:0005634">
    <property type="term" value="C:nucleus"/>
    <property type="evidence" value="ECO:0000266"/>
    <property type="project" value="RGD"/>
</dbReference>
<dbReference type="GO" id="GO:0005179">
    <property type="term" value="F:hormone activity"/>
    <property type="evidence" value="ECO:0000314"/>
    <property type="project" value="RGD"/>
</dbReference>
<dbReference type="GO" id="GO:0051428">
    <property type="term" value="F:peptide hormone receptor binding"/>
    <property type="evidence" value="ECO:0000250"/>
    <property type="project" value="UniProtKB"/>
</dbReference>
<dbReference type="GO" id="GO:0007189">
    <property type="term" value="P:adenylate cyclase-activating G protein-coupled receptor signaling pathway"/>
    <property type="evidence" value="ECO:0000314"/>
    <property type="project" value="RGD"/>
</dbReference>
<dbReference type="GO" id="GO:0030282">
    <property type="term" value="P:bone mineralization"/>
    <property type="evidence" value="ECO:0000266"/>
    <property type="project" value="RGD"/>
</dbReference>
<dbReference type="GO" id="GO:0002062">
    <property type="term" value="P:chondrocyte differentiation"/>
    <property type="evidence" value="ECO:0000266"/>
    <property type="project" value="RGD"/>
</dbReference>
<dbReference type="GO" id="GO:0001958">
    <property type="term" value="P:endochondral ossification"/>
    <property type="evidence" value="ECO:0000266"/>
    <property type="project" value="RGD"/>
</dbReference>
<dbReference type="GO" id="GO:0007492">
    <property type="term" value="P:endoderm development"/>
    <property type="evidence" value="ECO:0000266"/>
    <property type="project" value="RGD"/>
</dbReference>
<dbReference type="GO" id="GO:0048286">
    <property type="term" value="P:lung alveolus development"/>
    <property type="evidence" value="ECO:0000266"/>
    <property type="project" value="RGD"/>
</dbReference>
<dbReference type="GO" id="GO:0060487">
    <property type="term" value="P:lung epithelial cell differentiation"/>
    <property type="evidence" value="ECO:0000266"/>
    <property type="project" value="RGD"/>
</dbReference>
<dbReference type="GO" id="GO:0060649">
    <property type="term" value="P:mammary gland bud elongation"/>
    <property type="evidence" value="ECO:0000266"/>
    <property type="project" value="RGD"/>
</dbReference>
<dbReference type="GO" id="GO:0061182">
    <property type="term" value="P:negative regulation of chondrocyte development"/>
    <property type="evidence" value="ECO:0000266"/>
    <property type="project" value="RGD"/>
</dbReference>
<dbReference type="GO" id="GO:0032331">
    <property type="term" value="P:negative regulation of chondrocyte differentiation"/>
    <property type="evidence" value="ECO:0000266"/>
    <property type="project" value="RGD"/>
</dbReference>
<dbReference type="GO" id="GO:0060659">
    <property type="term" value="P:nipple sheath formation"/>
    <property type="evidence" value="ECO:0000266"/>
    <property type="project" value="RGD"/>
</dbReference>
<dbReference type="GO" id="GO:0002076">
    <property type="term" value="P:osteoblast development"/>
    <property type="evidence" value="ECO:0000266"/>
    <property type="project" value="RGD"/>
</dbReference>
<dbReference type="GO" id="GO:0008284">
    <property type="term" value="P:positive regulation of cell population proliferation"/>
    <property type="evidence" value="ECO:0000266"/>
    <property type="project" value="RGD"/>
</dbReference>
<dbReference type="GO" id="GO:0016485">
    <property type="term" value="P:protein processing"/>
    <property type="evidence" value="ECO:0000266"/>
    <property type="project" value="RGD"/>
</dbReference>
<dbReference type="GO" id="GO:0032330">
    <property type="term" value="P:regulation of chondrocyte differentiation"/>
    <property type="evidence" value="ECO:0000318"/>
    <property type="project" value="GO_Central"/>
</dbReference>
<dbReference type="GO" id="GO:0010468">
    <property type="term" value="P:regulation of gene expression"/>
    <property type="evidence" value="ECO:0000266"/>
    <property type="project" value="RGD"/>
</dbReference>
<dbReference type="GO" id="GO:0001501">
    <property type="term" value="P:skeletal system development"/>
    <property type="evidence" value="ECO:0000266"/>
    <property type="project" value="RGD"/>
</dbReference>
<dbReference type="GO" id="GO:0043129">
    <property type="term" value="P:surfactant homeostasis"/>
    <property type="evidence" value="ECO:0000266"/>
    <property type="project" value="RGD"/>
</dbReference>
<dbReference type="InterPro" id="IPR003626">
    <property type="entry name" value="PTH-rel"/>
</dbReference>
<dbReference type="InterPro" id="IPR001415">
    <property type="entry name" value="PTH/PTH-rel"/>
</dbReference>
<dbReference type="PANTHER" id="PTHR17223">
    <property type="entry name" value="PARATHYROID HORMONE-RELATED"/>
    <property type="match status" value="1"/>
</dbReference>
<dbReference type="PANTHER" id="PTHR17223:SF0">
    <property type="entry name" value="PARATHYROID HORMONE-RELATED PROTEIN"/>
    <property type="match status" value="1"/>
</dbReference>
<dbReference type="Pfam" id="PF01279">
    <property type="entry name" value="Parathyroid"/>
    <property type="match status" value="1"/>
</dbReference>
<dbReference type="SMART" id="SM00087">
    <property type="entry name" value="PTH"/>
    <property type="match status" value="1"/>
</dbReference>
<dbReference type="PROSITE" id="PS00335">
    <property type="entry name" value="PARATHYROID"/>
    <property type="match status" value="1"/>
</dbReference>
<feature type="signal peptide" evidence="3">
    <location>
        <begin position="1"/>
        <end position="24"/>
    </location>
</feature>
<feature type="propeptide" id="PRO_0000023235" evidence="1">
    <location>
        <begin position="25"/>
        <end position="34"/>
    </location>
</feature>
<feature type="chain" id="PRO_0000023236" description="Parathyroid hormone-related protein">
    <location>
        <begin position="37"/>
        <end position="177"/>
    </location>
</feature>
<feature type="peptide" id="PRO_0000023237" description="Osteostatin" evidence="1">
    <location>
        <begin position="143"/>
        <end position="175"/>
    </location>
</feature>
<feature type="region of interest" description="Important for receptor binding" evidence="1">
    <location>
        <begin position="57"/>
        <end position="68"/>
    </location>
</feature>
<feature type="region of interest" description="Disordered" evidence="4">
    <location>
        <begin position="74"/>
        <end position="177"/>
    </location>
</feature>
<feature type="short sequence motif" description="Nuclear localization signal" evidence="1">
    <location>
        <begin position="108"/>
        <end position="129"/>
    </location>
</feature>
<feature type="compositionally biased region" description="Polar residues" evidence="4">
    <location>
        <begin position="76"/>
        <end position="90"/>
    </location>
</feature>
<feature type="compositionally biased region" description="Basic and acidic residues" evidence="4">
    <location>
        <begin position="109"/>
        <end position="118"/>
    </location>
</feature>
<feature type="compositionally biased region" description="Basic residues" evidence="4">
    <location>
        <begin position="122"/>
        <end position="132"/>
    </location>
</feature>
<feature type="compositionally biased region" description="Low complexity" evidence="4">
    <location>
        <begin position="161"/>
        <end position="177"/>
    </location>
</feature>
<proteinExistence type="evidence at transcript level"/>
<sequence length="177" mass="20204">MLRRLVQQWSVLVFLLSYSVPSRGRSVEGLGRRLKRAVSEHQLLHDKGKSIQDLRRRFFLHHLIAEIHTAEIRATSEVSPNSKPAPNTKNHPVRFGSDDEGRYLTQETNKVETYKEQPLKTPGKKKKGKPGKRREQEKKKRRTRSAWPGTTGSGLLEDPQPHTSPTSTSLEPSSRTH</sequence>
<evidence type="ECO:0000250" key="1">
    <source>
        <dbReference type="UniProtKB" id="P12272"/>
    </source>
</evidence>
<evidence type="ECO:0000250" key="2">
    <source>
        <dbReference type="UniProtKB" id="P22858"/>
    </source>
</evidence>
<evidence type="ECO:0000255" key="3"/>
<evidence type="ECO:0000256" key="4">
    <source>
        <dbReference type="SAM" id="MobiDB-lite"/>
    </source>
</evidence>
<evidence type="ECO:0000269" key="5">
    <source>
    </source>
</evidence>
<evidence type="ECO:0000305" key="6"/>
<comment type="function">
    <text evidence="1 2 5">Neuroendocrine peptide which is a critical regulator of cellular and organ growth, development, migration, differentiation and survival and of epithelial calcium ion transport (PubMed:3175653). Acts by binding to its receptor, PTH1R, activating G protein-coupled receptor signaling (By similarity). Regulates endochondral bone development and epithelial-mesenchymal interactions during the formation of the mammary glands and teeth (By similarity). Required for skeletal homeostasis. Promotes mammary mesenchyme differentiation and bud outgrowth by modulating mesenchymal cell responsiveness to BMPs (By similarity). Up-regulates BMPR1A expression in the mammary mesenchyme and this increases the sensitivity of these cells to BMPs and allows them to respond to BMP4 in a paracrine and/or autocrine fashion. BMP4 signaling in the mesenchyme, in turn, triggers epithelial outgrowth and augments MSX2 expression, which causes the mammary mesenchyme to inhibit hair follicle formation within the nipple sheath (By similarity).</text>
</comment>
<comment type="function">
    <molecule>Osteostatin</molecule>
    <text evidence="1">Potent inhibitor of osteoclastic bone resorption.</text>
</comment>
<comment type="subunit">
    <text evidence="1">PTHrP interacts with PTH1R (via N-terminal extracellular domain).</text>
</comment>
<comment type="subcellular location">
    <subcellularLocation>
        <location evidence="1">Secreted</location>
    </subcellularLocation>
    <subcellularLocation>
        <location evidence="1">Cytoplasm</location>
    </subcellularLocation>
    <subcellularLocation>
        <location evidence="1">Nucleus</location>
    </subcellularLocation>
</comment>
<comment type="PTM">
    <text evidence="1">There are several secretory forms, including osteostatin, arising from endoproteolytic cleavage of the initial translation product. Each of these secretory forms is believed to have one or more of its own receptors that mediates the normal paracrine, autocrine and endocrine actions (By similarity).</text>
</comment>
<comment type="similarity">
    <text evidence="6">Belongs to the parathyroid hormone family.</text>
</comment>
<name>PTHR_RAT</name>
<reference key="1">
    <citation type="journal article" date="1988" name="Science">
        <title>Expression of a calcium-mobilizing parathyroid hormone-like peptide in lactating mammary tissue.</title>
        <authorList>
            <person name="Thiede M.A."/>
            <person name="Rodan G.A."/>
        </authorList>
    </citation>
    <scope>NUCLEOTIDE SEQUENCE [MRNA]</scope>
    <scope>FUNCTION</scope>
</reference>
<reference key="2">
    <citation type="journal article" date="1989" name="Mol. Endocrinol.">
        <title>Rat parathyroid hormone-like peptide: comparison with the human homologue and expression in malignant and normal tissue.</title>
        <authorList>
            <person name="Yasuda T."/>
            <person name="Banville D."/>
            <person name="Rabbani S.A."/>
            <person name="Hendy G.N."/>
            <person name="Goltzman D."/>
        </authorList>
    </citation>
    <scope>NUCLEOTIDE SEQUENCE [MRNA]</scope>
</reference>
<reference key="3">
    <citation type="journal article" date="1990" name="Mol. Endocrinol.">
        <title>Gene-encoding parathyroid hormone-like peptide: nucleotide sequence of the rat gene and comparison with the human homologue.</title>
        <authorList>
            <person name="Karaplis A.C."/>
            <person name="Yasuda T."/>
            <person name="Hendy G.N."/>
            <person name="Goltzman D."/>
            <person name="Banville D."/>
        </authorList>
    </citation>
    <scope>NUCLEOTIDE SEQUENCE [GENOMIC DNA]</scope>
</reference>